<proteinExistence type="inferred from homology"/>
<feature type="chain" id="PRO_1000141023" description="Small ribosomal subunit protein uS3">
    <location>
        <begin position="1"/>
        <end position="217"/>
    </location>
</feature>
<feature type="domain" description="KH type-2" evidence="1">
    <location>
        <begin position="38"/>
        <end position="106"/>
    </location>
</feature>
<dbReference type="EMBL" id="CP001033">
    <property type="protein sequence ID" value="ACB89476.1"/>
    <property type="molecule type" value="Genomic_DNA"/>
</dbReference>
<dbReference type="RefSeq" id="WP_000529936.1">
    <property type="nucleotide sequence ID" value="NC_010582.1"/>
</dbReference>
<dbReference type="SMR" id="B2IS46"/>
<dbReference type="GeneID" id="49600535"/>
<dbReference type="KEGG" id="spw:SPCG_0224"/>
<dbReference type="HOGENOM" id="CLU_058591_0_2_9"/>
<dbReference type="GO" id="GO:0022627">
    <property type="term" value="C:cytosolic small ribosomal subunit"/>
    <property type="evidence" value="ECO:0007669"/>
    <property type="project" value="TreeGrafter"/>
</dbReference>
<dbReference type="GO" id="GO:0003729">
    <property type="term" value="F:mRNA binding"/>
    <property type="evidence" value="ECO:0007669"/>
    <property type="project" value="UniProtKB-UniRule"/>
</dbReference>
<dbReference type="GO" id="GO:0019843">
    <property type="term" value="F:rRNA binding"/>
    <property type="evidence" value="ECO:0007669"/>
    <property type="project" value="UniProtKB-UniRule"/>
</dbReference>
<dbReference type="GO" id="GO:0003735">
    <property type="term" value="F:structural constituent of ribosome"/>
    <property type="evidence" value="ECO:0007669"/>
    <property type="project" value="InterPro"/>
</dbReference>
<dbReference type="GO" id="GO:0006412">
    <property type="term" value="P:translation"/>
    <property type="evidence" value="ECO:0007669"/>
    <property type="project" value="UniProtKB-UniRule"/>
</dbReference>
<dbReference type="CDD" id="cd02412">
    <property type="entry name" value="KH-II_30S_S3"/>
    <property type="match status" value="1"/>
</dbReference>
<dbReference type="FunFam" id="3.30.1140.32:FF:000001">
    <property type="entry name" value="30S ribosomal protein S3"/>
    <property type="match status" value="1"/>
</dbReference>
<dbReference type="FunFam" id="3.30.300.20:FF:000001">
    <property type="entry name" value="30S ribosomal protein S3"/>
    <property type="match status" value="1"/>
</dbReference>
<dbReference type="Gene3D" id="3.30.300.20">
    <property type="match status" value="1"/>
</dbReference>
<dbReference type="Gene3D" id="3.30.1140.32">
    <property type="entry name" value="Ribosomal protein S3, C-terminal domain"/>
    <property type="match status" value="1"/>
</dbReference>
<dbReference type="HAMAP" id="MF_01309_B">
    <property type="entry name" value="Ribosomal_uS3_B"/>
    <property type="match status" value="1"/>
</dbReference>
<dbReference type="InterPro" id="IPR004087">
    <property type="entry name" value="KH_dom"/>
</dbReference>
<dbReference type="InterPro" id="IPR015946">
    <property type="entry name" value="KH_dom-like_a/b"/>
</dbReference>
<dbReference type="InterPro" id="IPR004044">
    <property type="entry name" value="KH_dom_type_2"/>
</dbReference>
<dbReference type="InterPro" id="IPR009019">
    <property type="entry name" value="KH_sf_prok-type"/>
</dbReference>
<dbReference type="InterPro" id="IPR036419">
    <property type="entry name" value="Ribosomal_S3_C_sf"/>
</dbReference>
<dbReference type="InterPro" id="IPR005704">
    <property type="entry name" value="Ribosomal_uS3_bac-typ"/>
</dbReference>
<dbReference type="InterPro" id="IPR001351">
    <property type="entry name" value="Ribosomal_uS3_C"/>
</dbReference>
<dbReference type="InterPro" id="IPR018280">
    <property type="entry name" value="Ribosomal_uS3_CS"/>
</dbReference>
<dbReference type="NCBIfam" id="TIGR01009">
    <property type="entry name" value="rpsC_bact"/>
    <property type="match status" value="1"/>
</dbReference>
<dbReference type="PANTHER" id="PTHR11760">
    <property type="entry name" value="30S/40S RIBOSOMAL PROTEIN S3"/>
    <property type="match status" value="1"/>
</dbReference>
<dbReference type="PANTHER" id="PTHR11760:SF19">
    <property type="entry name" value="SMALL RIBOSOMAL SUBUNIT PROTEIN US3C"/>
    <property type="match status" value="1"/>
</dbReference>
<dbReference type="Pfam" id="PF07650">
    <property type="entry name" value="KH_2"/>
    <property type="match status" value="1"/>
</dbReference>
<dbReference type="Pfam" id="PF00189">
    <property type="entry name" value="Ribosomal_S3_C"/>
    <property type="match status" value="1"/>
</dbReference>
<dbReference type="SMART" id="SM00322">
    <property type="entry name" value="KH"/>
    <property type="match status" value="1"/>
</dbReference>
<dbReference type="SUPFAM" id="SSF54814">
    <property type="entry name" value="Prokaryotic type KH domain (KH-domain type II)"/>
    <property type="match status" value="1"/>
</dbReference>
<dbReference type="SUPFAM" id="SSF54821">
    <property type="entry name" value="Ribosomal protein S3 C-terminal domain"/>
    <property type="match status" value="1"/>
</dbReference>
<dbReference type="PROSITE" id="PS50823">
    <property type="entry name" value="KH_TYPE_2"/>
    <property type="match status" value="1"/>
</dbReference>
<dbReference type="PROSITE" id="PS00548">
    <property type="entry name" value="RIBOSOMAL_S3"/>
    <property type="match status" value="1"/>
</dbReference>
<evidence type="ECO:0000255" key="1">
    <source>
        <dbReference type="HAMAP-Rule" id="MF_01309"/>
    </source>
</evidence>
<evidence type="ECO:0000305" key="2"/>
<reference key="1">
    <citation type="journal article" date="2009" name="BMC Genomics">
        <title>Genome evolution driven by host adaptations results in a more virulent and antimicrobial-resistant Streptococcus pneumoniae serotype 14.</title>
        <authorList>
            <person name="Ding F."/>
            <person name="Tang P."/>
            <person name="Hsu M.-H."/>
            <person name="Cui P."/>
            <person name="Hu S."/>
            <person name="Yu J."/>
            <person name="Chiu C.-H."/>
        </authorList>
    </citation>
    <scope>NUCLEOTIDE SEQUENCE [LARGE SCALE GENOMIC DNA]</scope>
    <source>
        <strain>CGSP14</strain>
    </source>
</reference>
<name>RS3_STRPS</name>
<organism>
    <name type="scientific">Streptococcus pneumoniae (strain CGSP14)</name>
    <dbReference type="NCBI Taxonomy" id="516950"/>
    <lineage>
        <taxon>Bacteria</taxon>
        <taxon>Bacillati</taxon>
        <taxon>Bacillota</taxon>
        <taxon>Bacilli</taxon>
        <taxon>Lactobacillales</taxon>
        <taxon>Streptococcaceae</taxon>
        <taxon>Streptococcus</taxon>
    </lineage>
</organism>
<accession>B2IS46</accession>
<gene>
    <name evidence="1" type="primary">rpsC</name>
    <name type="ordered locus">SPCG_0224</name>
</gene>
<keyword id="KW-0687">Ribonucleoprotein</keyword>
<keyword id="KW-0689">Ribosomal protein</keyword>
<keyword id="KW-0694">RNA-binding</keyword>
<keyword id="KW-0699">rRNA-binding</keyword>
<sequence length="217" mass="24046">MGQKVHPIGMRVGIIRDWDAKWYAEKEYADYLHEDLAIRKFVQKELADAAVSTIEIERAVNKVNVSLHTAKPGMVIGKGGANVDALRAKLNKLTGKQVHINIIEIKQPDLDAHLVGEGIARQLEQRVAFRRAQKQAIQRAMRAGAKGIKTQVSGRLNGADIARAEGYSEGTVPLHTLRADIDYAWEEADTTYGKLGVKVWIYRGEVLPARKNTKGGK</sequence>
<protein>
    <recommendedName>
        <fullName evidence="1">Small ribosomal subunit protein uS3</fullName>
    </recommendedName>
    <alternativeName>
        <fullName evidence="2">30S ribosomal protein S3</fullName>
    </alternativeName>
</protein>
<comment type="function">
    <text evidence="1">Binds the lower part of the 30S subunit head. Binds mRNA in the 70S ribosome, positioning it for translation.</text>
</comment>
<comment type="subunit">
    <text evidence="1">Part of the 30S ribosomal subunit. Forms a tight complex with proteins S10 and S14.</text>
</comment>
<comment type="similarity">
    <text evidence="1">Belongs to the universal ribosomal protein uS3 family.</text>
</comment>